<protein>
    <recommendedName>
        <fullName evidence="1">Dihydroorotate dehydrogenase (quinone)</fullName>
        <ecNumber evidence="1">1.3.5.2</ecNumber>
    </recommendedName>
    <alternativeName>
        <fullName evidence="1">DHOdehase</fullName>
        <shortName evidence="1">DHOD</shortName>
        <shortName evidence="1">DHODase</shortName>
    </alternativeName>
    <alternativeName>
        <fullName evidence="1">Dihydroorotate oxidase</fullName>
    </alternativeName>
</protein>
<name>PYRD_PSEPK</name>
<sequence>MYTLARQLLFKLSPETSHDLSLDLIGAGGRLGLNGMLCKQPASLPVSVMGLNFANPVGLAAGLDKNGAAIDGFAQLGFGFVEIGTVTPRPQPGNPKPRLFRLPEATAIINRMGFNNLGVDHLLGRVRASRYKGVLGINIGKNFDTPVERAVDDYLICLDKVYTAASYITVNVSSPNTPGLRSLQFGDSLKQLLDALAERREQLAGAHGKRVPLAIKIAPDMSDEETALVAAALMESGMDAVIATNTTLGREGVEALPYGGEAGGLSGAPVLEKSTHIVKVLAGELGGKLPIIAAGGITEGRHAAEKIAAGASLVQIYSGFIYKGPALIREAVDAIAAMPR</sequence>
<organism>
    <name type="scientific">Pseudomonas putida (strain ATCC 47054 / DSM 6125 / CFBP 8728 / NCIMB 11950 / KT2440)</name>
    <dbReference type="NCBI Taxonomy" id="160488"/>
    <lineage>
        <taxon>Bacteria</taxon>
        <taxon>Pseudomonadati</taxon>
        <taxon>Pseudomonadota</taxon>
        <taxon>Gammaproteobacteria</taxon>
        <taxon>Pseudomonadales</taxon>
        <taxon>Pseudomonadaceae</taxon>
        <taxon>Pseudomonas</taxon>
    </lineage>
</organism>
<evidence type="ECO:0000255" key="1">
    <source>
        <dbReference type="HAMAP-Rule" id="MF_00225"/>
    </source>
</evidence>
<gene>
    <name evidence="1" type="primary">pyrD</name>
    <name type="ordered locus">PP_2095</name>
</gene>
<accession>Q88L40</accession>
<feature type="chain" id="PRO_0000148468" description="Dihydroorotate dehydrogenase (quinone)">
    <location>
        <begin position="1"/>
        <end position="340"/>
    </location>
</feature>
<feature type="active site" description="Nucleophile" evidence="1">
    <location>
        <position position="174"/>
    </location>
</feature>
<feature type="binding site" evidence="1">
    <location>
        <begin position="61"/>
        <end position="65"/>
    </location>
    <ligand>
        <name>FMN</name>
        <dbReference type="ChEBI" id="CHEBI:58210"/>
    </ligand>
</feature>
<feature type="binding site" evidence="1">
    <location>
        <position position="65"/>
    </location>
    <ligand>
        <name>substrate</name>
    </ligand>
</feature>
<feature type="binding site" evidence="1">
    <location>
        <position position="85"/>
    </location>
    <ligand>
        <name>FMN</name>
        <dbReference type="ChEBI" id="CHEBI:58210"/>
    </ligand>
</feature>
<feature type="binding site" evidence="1">
    <location>
        <begin position="110"/>
        <end position="114"/>
    </location>
    <ligand>
        <name>substrate</name>
    </ligand>
</feature>
<feature type="binding site" evidence="1">
    <location>
        <position position="138"/>
    </location>
    <ligand>
        <name>FMN</name>
        <dbReference type="ChEBI" id="CHEBI:58210"/>
    </ligand>
</feature>
<feature type="binding site" evidence="1">
    <location>
        <position position="171"/>
    </location>
    <ligand>
        <name>FMN</name>
        <dbReference type="ChEBI" id="CHEBI:58210"/>
    </ligand>
</feature>
<feature type="binding site" evidence="1">
    <location>
        <position position="171"/>
    </location>
    <ligand>
        <name>substrate</name>
    </ligand>
</feature>
<feature type="binding site" evidence="1">
    <location>
        <position position="176"/>
    </location>
    <ligand>
        <name>substrate</name>
    </ligand>
</feature>
<feature type="binding site" evidence="1">
    <location>
        <position position="216"/>
    </location>
    <ligand>
        <name>FMN</name>
        <dbReference type="ChEBI" id="CHEBI:58210"/>
    </ligand>
</feature>
<feature type="binding site" evidence="1">
    <location>
        <position position="244"/>
    </location>
    <ligand>
        <name>FMN</name>
        <dbReference type="ChEBI" id="CHEBI:58210"/>
    </ligand>
</feature>
<feature type="binding site" evidence="1">
    <location>
        <begin position="245"/>
        <end position="246"/>
    </location>
    <ligand>
        <name>substrate</name>
    </ligand>
</feature>
<feature type="binding site" evidence="1">
    <location>
        <position position="267"/>
    </location>
    <ligand>
        <name>FMN</name>
        <dbReference type="ChEBI" id="CHEBI:58210"/>
    </ligand>
</feature>
<feature type="binding site" evidence="1">
    <location>
        <position position="296"/>
    </location>
    <ligand>
        <name>FMN</name>
        <dbReference type="ChEBI" id="CHEBI:58210"/>
    </ligand>
</feature>
<feature type="binding site" evidence="1">
    <location>
        <begin position="317"/>
        <end position="318"/>
    </location>
    <ligand>
        <name>FMN</name>
        <dbReference type="ChEBI" id="CHEBI:58210"/>
    </ligand>
</feature>
<proteinExistence type="inferred from homology"/>
<keyword id="KW-1003">Cell membrane</keyword>
<keyword id="KW-0285">Flavoprotein</keyword>
<keyword id="KW-0288">FMN</keyword>
<keyword id="KW-0472">Membrane</keyword>
<keyword id="KW-0560">Oxidoreductase</keyword>
<keyword id="KW-0665">Pyrimidine biosynthesis</keyword>
<keyword id="KW-1185">Reference proteome</keyword>
<reference key="1">
    <citation type="journal article" date="2002" name="Environ. Microbiol.">
        <title>Complete genome sequence and comparative analysis of the metabolically versatile Pseudomonas putida KT2440.</title>
        <authorList>
            <person name="Nelson K.E."/>
            <person name="Weinel C."/>
            <person name="Paulsen I.T."/>
            <person name="Dodson R.J."/>
            <person name="Hilbert H."/>
            <person name="Martins dos Santos V.A.P."/>
            <person name="Fouts D.E."/>
            <person name="Gill S.R."/>
            <person name="Pop M."/>
            <person name="Holmes M."/>
            <person name="Brinkac L.M."/>
            <person name="Beanan M.J."/>
            <person name="DeBoy R.T."/>
            <person name="Daugherty S.C."/>
            <person name="Kolonay J.F."/>
            <person name="Madupu R."/>
            <person name="Nelson W.C."/>
            <person name="White O."/>
            <person name="Peterson J.D."/>
            <person name="Khouri H.M."/>
            <person name="Hance I."/>
            <person name="Chris Lee P."/>
            <person name="Holtzapple E.K."/>
            <person name="Scanlan D."/>
            <person name="Tran K."/>
            <person name="Moazzez A."/>
            <person name="Utterback T.R."/>
            <person name="Rizzo M."/>
            <person name="Lee K."/>
            <person name="Kosack D."/>
            <person name="Moestl D."/>
            <person name="Wedler H."/>
            <person name="Lauber J."/>
            <person name="Stjepandic D."/>
            <person name="Hoheisel J."/>
            <person name="Straetz M."/>
            <person name="Heim S."/>
            <person name="Kiewitz C."/>
            <person name="Eisen J.A."/>
            <person name="Timmis K.N."/>
            <person name="Duesterhoeft A."/>
            <person name="Tuemmler B."/>
            <person name="Fraser C.M."/>
        </authorList>
    </citation>
    <scope>NUCLEOTIDE SEQUENCE [LARGE SCALE GENOMIC DNA]</scope>
    <source>
        <strain>ATCC 47054 / DSM 6125 / CFBP 8728 / NCIMB 11950 / KT2440</strain>
    </source>
</reference>
<comment type="function">
    <text evidence="1">Catalyzes the conversion of dihydroorotate to orotate with quinone as electron acceptor.</text>
</comment>
<comment type="catalytic activity">
    <reaction evidence="1">
        <text>(S)-dihydroorotate + a quinone = orotate + a quinol</text>
        <dbReference type="Rhea" id="RHEA:30187"/>
        <dbReference type="ChEBI" id="CHEBI:24646"/>
        <dbReference type="ChEBI" id="CHEBI:30839"/>
        <dbReference type="ChEBI" id="CHEBI:30864"/>
        <dbReference type="ChEBI" id="CHEBI:132124"/>
        <dbReference type="EC" id="1.3.5.2"/>
    </reaction>
</comment>
<comment type="cofactor">
    <cofactor evidence="1">
        <name>FMN</name>
        <dbReference type="ChEBI" id="CHEBI:58210"/>
    </cofactor>
    <text evidence="1">Binds 1 FMN per subunit.</text>
</comment>
<comment type="pathway">
    <text evidence="1">Pyrimidine metabolism; UMP biosynthesis via de novo pathway; orotate from (S)-dihydroorotate (quinone route): step 1/1.</text>
</comment>
<comment type="subunit">
    <text evidence="1">Monomer.</text>
</comment>
<comment type="subcellular location">
    <subcellularLocation>
        <location evidence="1">Cell membrane</location>
        <topology evidence="1">Peripheral membrane protein</topology>
    </subcellularLocation>
</comment>
<comment type="similarity">
    <text evidence="1">Belongs to the dihydroorotate dehydrogenase family. Type 2 subfamily.</text>
</comment>
<dbReference type="EC" id="1.3.5.2" evidence="1"/>
<dbReference type="EMBL" id="AE015451">
    <property type="protein sequence ID" value="AAN67709.1"/>
    <property type="molecule type" value="Genomic_DNA"/>
</dbReference>
<dbReference type="RefSeq" id="NP_744245.1">
    <property type="nucleotide sequence ID" value="NC_002947.4"/>
</dbReference>
<dbReference type="RefSeq" id="WP_010953095.1">
    <property type="nucleotide sequence ID" value="NZ_CP169744.1"/>
</dbReference>
<dbReference type="SMR" id="Q88L40"/>
<dbReference type="STRING" id="160488.PP_2095"/>
<dbReference type="PaxDb" id="160488-PP_2095"/>
<dbReference type="KEGG" id="ppu:PP_2095"/>
<dbReference type="PATRIC" id="fig|160488.4.peg.2209"/>
<dbReference type="eggNOG" id="COG0167">
    <property type="taxonomic scope" value="Bacteria"/>
</dbReference>
<dbReference type="HOGENOM" id="CLU_013640_2_0_6"/>
<dbReference type="OrthoDB" id="9802377at2"/>
<dbReference type="PhylomeDB" id="Q88L40"/>
<dbReference type="BioCyc" id="PPUT160488:G1G01-2233-MONOMER"/>
<dbReference type="UniPathway" id="UPA00070">
    <property type="reaction ID" value="UER00946"/>
</dbReference>
<dbReference type="Proteomes" id="UP000000556">
    <property type="component" value="Chromosome"/>
</dbReference>
<dbReference type="GO" id="GO:0005737">
    <property type="term" value="C:cytoplasm"/>
    <property type="evidence" value="ECO:0007669"/>
    <property type="project" value="InterPro"/>
</dbReference>
<dbReference type="GO" id="GO:0005886">
    <property type="term" value="C:plasma membrane"/>
    <property type="evidence" value="ECO:0007669"/>
    <property type="project" value="UniProtKB-SubCell"/>
</dbReference>
<dbReference type="GO" id="GO:0106430">
    <property type="term" value="F:dihydroorotate dehydrogenase (quinone) activity"/>
    <property type="evidence" value="ECO:0007669"/>
    <property type="project" value="UniProtKB-EC"/>
</dbReference>
<dbReference type="GO" id="GO:0006207">
    <property type="term" value="P:'de novo' pyrimidine nucleobase biosynthetic process"/>
    <property type="evidence" value="ECO:0007669"/>
    <property type="project" value="InterPro"/>
</dbReference>
<dbReference type="GO" id="GO:0044205">
    <property type="term" value="P:'de novo' UMP biosynthetic process"/>
    <property type="evidence" value="ECO:0007669"/>
    <property type="project" value="UniProtKB-UniRule"/>
</dbReference>
<dbReference type="CDD" id="cd04738">
    <property type="entry name" value="DHOD_2_like"/>
    <property type="match status" value="1"/>
</dbReference>
<dbReference type="FunFam" id="3.20.20.70:FF:000028">
    <property type="entry name" value="Dihydroorotate dehydrogenase (quinone)"/>
    <property type="match status" value="1"/>
</dbReference>
<dbReference type="Gene3D" id="3.20.20.70">
    <property type="entry name" value="Aldolase class I"/>
    <property type="match status" value="1"/>
</dbReference>
<dbReference type="HAMAP" id="MF_00225">
    <property type="entry name" value="DHO_dh_type2"/>
    <property type="match status" value="1"/>
</dbReference>
<dbReference type="InterPro" id="IPR013785">
    <property type="entry name" value="Aldolase_TIM"/>
</dbReference>
<dbReference type="InterPro" id="IPR050074">
    <property type="entry name" value="DHO_dehydrogenase"/>
</dbReference>
<dbReference type="InterPro" id="IPR012135">
    <property type="entry name" value="Dihydroorotate_DH_1_2"/>
</dbReference>
<dbReference type="InterPro" id="IPR005719">
    <property type="entry name" value="Dihydroorotate_DH_2"/>
</dbReference>
<dbReference type="InterPro" id="IPR005720">
    <property type="entry name" value="Dihydroorotate_DH_cat"/>
</dbReference>
<dbReference type="InterPro" id="IPR001295">
    <property type="entry name" value="Dihydroorotate_DH_CS"/>
</dbReference>
<dbReference type="NCBIfam" id="NF003644">
    <property type="entry name" value="PRK05286.1-1"/>
    <property type="match status" value="1"/>
</dbReference>
<dbReference type="NCBIfam" id="NF003645">
    <property type="entry name" value="PRK05286.1-2"/>
    <property type="match status" value="1"/>
</dbReference>
<dbReference type="NCBIfam" id="NF003646">
    <property type="entry name" value="PRK05286.1-4"/>
    <property type="match status" value="1"/>
</dbReference>
<dbReference type="NCBIfam" id="NF003652">
    <property type="entry name" value="PRK05286.2-5"/>
    <property type="match status" value="1"/>
</dbReference>
<dbReference type="NCBIfam" id="TIGR01036">
    <property type="entry name" value="pyrD_sub2"/>
    <property type="match status" value="1"/>
</dbReference>
<dbReference type="PANTHER" id="PTHR48109:SF4">
    <property type="entry name" value="DIHYDROOROTATE DEHYDROGENASE (QUINONE), MITOCHONDRIAL"/>
    <property type="match status" value="1"/>
</dbReference>
<dbReference type="PANTHER" id="PTHR48109">
    <property type="entry name" value="DIHYDROOROTATE DEHYDROGENASE (QUINONE), MITOCHONDRIAL-RELATED"/>
    <property type="match status" value="1"/>
</dbReference>
<dbReference type="Pfam" id="PF01180">
    <property type="entry name" value="DHO_dh"/>
    <property type="match status" value="1"/>
</dbReference>
<dbReference type="PIRSF" id="PIRSF000164">
    <property type="entry name" value="DHO_oxidase"/>
    <property type="match status" value="1"/>
</dbReference>
<dbReference type="SUPFAM" id="SSF51395">
    <property type="entry name" value="FMN-linked oxidoreductases"/>
    <property type="match status" value="1"/>
</dbReference>
<dbReference type="PROSITE" id="PS00911">
    <property type="entry name" value="DHODEHASE_1"/>
    <property type="match status" value="1"/>
</dbReference>